<name>GRB1L_DANRE</name>
<evidence type="ECO:0000255" key="1"/>
<evidence type="ECO:0000256" key="2">
    <source>
        <dbReference type="SAM" id="MobiDB-lite"/>
    </source>
</evidence>
<evidence type="ECO:0000269" key="3">
    <source>
    </source>
</evidence>
<evidence type="ECO:0000269" key="4">
    <source>
    </source>
</evidence>
<evidence type="ECO:0000269" key="5">
    <source>
    </source>
</evidence>
<evidence type="ECO:0000305" key="6"/>
<reference key="1">
    <citation type="journal article" date="2013" name="Nature">
        <title>The zebrafish reference genome sequence and its relationship to the human genome.</title>
        <authorList>
            <person name="Howe K."/>
            <person name="Clark M.D."/>
            <person name="Torroja C.F."/>
            <person name="Torrance J."/>
            <person name="Berthelot C."/>
            <person name="Muffato M."/>
            <person name="Collins J.E."/>
            <person name="Humphray S."/>
            <person name="McLaren K."/>
            <person name="Matthews L."/>
            <person name="McLaren S."/>
            <person name="Sealy I."/>
            <person name="Caccamo M."/>
            <person name="Churcher C."/>
            <person name="Scott C."/>
            <person name="Barrett J.C."/>
            <person name="Koch R."/>
            <person name="Rauch G.J."/>
            <person name="White S."/>
            <person name="Chow W."/>
            <person name="Kilian B."/>
            <person name="Quintais L.T."/>
            <person name="Guerra-Assuncao J.A."/>
            <person name="Zhou Y."/>
            <person name="Gu Y."/>
            <person name="Yen J."/>
            <person name="Vogel J.H."/>
            <person name="Eyre T."/>
            <person name="Redmond S."/>
            <person name="Banerjee R."/>
            <person name="Chi J."/>
            <person name="Fu B."/>
            <person name="Langley E."/>
            <person name="Maguire S.F."/>
            <person name="Laird G.K."/>
            <person name="Lloyd D."/>
            <person name="Kenyon E."/>
            <person name="Donaldson S."/>
            <person name="Sehra H."/>
            <person name="Almeida-King J."/>
            <person name="Loveland J."/>
            <person name="Trevanion S."/>
            <person name="Jones M."/>
            <person name="Quail M."/>
            <person name="Willey D."/>
            <person name="Hunt A."/>
            <person name="Burton J."/>
            <person name="Sims S."/>
            <person name="McLay K."/>
            <person name="Plumb B."/>
            <person name="Davis J."/>
            <person name="Clee C."/>
            <person name="Oliver K."/>
            <person name="Clark R."/>
            <person name="Riddle C."/>
            <person name="Elliot D."/>
            <person name="Threadgold G."/>
            <person name="Harden G."/>
            <person name="Ware D."/>
            <person name="Begum S."/>
            <person name="Mortimore B."/>
            <person name="Kerry G."/>
            <person name="Heath P."/>
            <person name="Phillimore B."/>
            <person name="Tracey A."/>
            <person name="Corby N."/>
            <person name="Dunn M."/>
            <person name="Johnson C."/>
            <person name="Wood J."/>
            <person name="Clark S."/>
            <person name="Pelan S."/>
            <person name="Griffiths G."/>
            <person name="Smith M."/>
            <person name="Glithero R."/>
            <person name="Howden P."/>
            <person name="Barker N."/>
            <person name="Lloyd C."/>
            <person name="Stevens C."/>
            <person name="Harley J."/>
            <person name="Holt K."/>
            <person name="Panagiotidis G."/>
            <person name="Lovell J."/>
            <person name="Beasley H."/>
            <person name="Henderson C."/>
            <person name="Gordon D."/>
            <person name="Auger K."/>
            <person name="Wright D."/>
            <person name="Collins J."/>
            <person name="Raisen C."/>
            <person name="Dyer L."/>
            <person name="Leung K."/>
            <person name="Robertson L."/>
            <person name="Ambridge K."/>
            <person name="Leongamornlert D."/>
            <person name="McGuire S."/>
            <person name="Gilderthorp R."/>
            <person name="Griffiths C."/>
            <person name="Manthravadi D."/>
            <person name="Nichol S."/>
            <person name="Barker G."/>
            <person name="Whitehead S."/>
            <person name="Kay M."/>
            <person name="Brown J."/>
            <person name="Murnane C."/>
            <person name="Gray E."/>
            <person name="Humphries M."/>
            <person name="Sycamore N."/>
            <person name="Barker D."/>
            <person name="Saunders D."/>
            <person name="Wallis J."/>
            <person name="Babbage A."/>
            <person name="Hammond S."/>
            <person name="Mashreghi-Mohammadi M."/>
            <person name="Barr L."/>
            <person name="Martin S."/>
            <person name="Wray P."/>
            <person name="Ellington A."/>
            <person name="Matthews N."/>
            <person name="Ellwood M."/>
            <person name="Woodmansey R."/>
            <person name="Clark G."/>
            <person name="Cooper J."/>
            <person name="Tromans A."/>
            <person name="Grafham D."/>
            <person name="Skuce C."/>
            <person name="Pandian R."/>
            <person name="Andrews R."/>
            <person name="Harrison E."/>
            <person name="Kimberley A."/>
            <person name="Garnett J."/>
            <person name="Fosker N."/>
            <person name="Hall R."/>
            <person name="Garner P."/>
            <person name="Kelly D."/>
            <person name="Bird C."/>
            <person name="Palmer S."/>
            <person name="Gehring I."/>
            <person name="Berger A."/>
            <person name="Dooley C.M."/>
            <person name="Ersan-Urun Z."/>
            <person name="Eser C."/>
            <person name="Geiger H."/>
            <person name="Geisler M."/>
            <person name="Karotki L."/>
            <person name="Kirn A."/>
            <person name="Konantz J."/>
            <person name="Konantz M."/>
            <person name="Oberlander M."/>
            <person name="Rudolph-Geiger S."/>
            <person name="Teucke M."/>
            <person name="Lanz C."/>
            <person name="Raddatz G."/>
            <person name="Osoegawa K."/>
            <person name="Zhu B."/>
            <person name="Rapp A."/>
            <person name="Widaa S."/>
            <person name="Langford C."/>
            <person name="Yang F."/>
            <person name="Schuster S.C."/>
            <person name="Carter N.P."/>
            <person name="Harrow J."/>
            <person name="Ning Z."/>
            <person name="Herrero J."/>
            <person name="Searle S.M."/>
            <person name="Enright A."/>
            <person name="Geisler R."/>
            <person name="Plasterk R.H."/>
            <person name="Lee C."/>
            <person name="Westerfield M."/>
            <person name="de Jong P.J."/>
            <person name="Zon L.I."/>
            <person name="Postlethwait J.H."/>
            <person name="Nusslein-Volhard C."/>
            <person name="Hubbard T.J."/>
            <person name="Roest Crollius H."/>
            <person name="Rogers J."/>
            <person name="Stemple D.L."/>
        </authorList>
    </citation>
    <scope>NUCLEOTIDE SEQUENCE [LARGE SCALE GENOMIC DNA]</scope>
    <source>
        <strain>Tuebingen</strain>
    </source>
</reference>
<reference key="2">
    <citation type="journal article" date="2017" name="Am. J. Hum. Genet.">
        <title>Exome-wide association study identifies GREB1L mutations in congenital kidney malformations.</title>
        <authorList>
            <person name="Sanna-Cherchi S."/>
            <person name="Khan K."/>
            <person name="Westland R."/>
            <person name="Krithivasan P."/>
            <person name="Fievet L."/>
            <person name="Rasouly H.M."/>
            <person name="Ionita-Laza I."/>
            <person name="Capone V.P."/>
            <person name="Fasel D.A."/>
            <person name="Kiryluk K."/>
            <person name="Kamalakaran S."/>
            <person name="Bodria M."/>
            <person name="Otto E.A."/>
            <person name="Sampson M.G."/>
            <person name="Gillies C.E."/>
            <person name="Vega-Warner V."/>
            <person name="Vukojevic K."/>
            <person name="Pediaditakis I."/>
            <person name="Makar G.S."/>
            <person name="Mitrotti A."/>
            <person name="Verbitsky M."/>
            <person name="Martino J."/>
            <person name="Liu Q."/>
            <person name="Na Y.J."/>
            <person name="Goj V."/>
            <person name="Ardissino G."/>
            <person name="Gigante M."/>
            <person name="Gesualdo L."/>
            <person name="Janezcko M."/>
            <person name="Zaniew M."/>
            <person name="Mendelsohn C.L."/>
            <person name="Shril S."/>
            <person name="Hildebrandt F."/>
            <person name="van Wijk J.A.E."/>
            <person name="Arapovic A."/>
            <person name="Saraga M."/>
            <person name="Allegri L."/>
            <person name="Izzi C."/>
            <person name="Scolari F."/>
            <person name="Tasic V."/>
            <person name="Ghiggeri G.M."/>
            <person name="Latos-Bielenska A."/>
            <person name="Materna-Kiryluk A."/>
            <person name="Mane S."/>
            <person name="Goldstein D.B."/>
            <person name="Lifton R.P."/>
            <person name="Katsanis N."/>
            <person name="Davis E.E."/>
            <person name="Gharavi A.G."/>
        </authorList>
    </citation>
    <scope>FUNCTION</scope>
    <scope>DISRUPTION PHENOTYPE</scope>
</reference>
<reference key="3">
    <citation type="journal article" date="2017" name="Genetics">
        <title>A gene implicated in activation of retinoic acid receptor targets is a novel renal agenesis gene in humans.</title>
        <authorList>
            <person name="Brophy P.D."/>
            <person name="Rasmussen M."/>
            <person name="Parida M."/>
            <person name="Bonde G."/>
            <person name="Darbro B.W."/>
            <person name="Hong X."/>
            <person name="Clarke J.C."/>
            <person name="Peterson K.A."/>
            <person name="Denegre J."/>
            <person name="Schneider M."/>
            <person name="Sussman C.R."/>
            <person name="Sunde L."/>
            <person name="Lildballe D.L."/>
            <person name="Hertz J.M."/>
            <person name="Cornell R.A."/>
            <person name="Murray S.A."/>
            <person name="Manak J.R."/>
        </authorList>
    </citation>
    <scope>FUNCTION</scope>
    <scope>DEVELOPMENTAL STAGE</scope>
    <scope>DISRUPTION PHENOTYPE</scope>
</reference>
<reference key="4">
    <citation type="journal article" date="2018" name="Hum. Genet.">
        <title>De novo variants in GREB1L are associated with non-syndromic inner ear malformations and deafness.</title>
        <authorList>
            <person name="Schrauwen I."/>
            <person name="Kari E."/>
            <person name="Mattox J."/>
            <person name="Llaci L."/>
            <person name="Smeeton J."/>
            <person name="Naymik M."/>
            <person name="Raible D.W."/>
            <person name="Knowles J.A."/>
            <person name="Crump J.G."/>
            <person name="Huentelman M.J."/>
            <person name="Friedman R.A."/>
        </authorList>
    </citation>
    <scope>MUTAGENESIS OF 408-GLN--ILE-1942</scope>
</reference>
<protein>
    <recommendedName>
        <fullName>GREB1-like protein</fullName>
    </recommendedName>
</protein>
<dbReference type="EMBL" id="CT573467">
    <property type="status" value="NOT_ANNOTATED_CDS"/>
    <property type="molecule type" value="Genomic_DNA"/>
</dbReference>
<dbReference type="EMBL" id="CU138514">
    <property type="status" value="NOT_ANNOTATED_CDS"/>
    <property type="molecule type" value="Genomic_DNA"/>
</dbReference>
<dbReference type="EMBL" id="CU682364">
    <property type="status" value="NOT_ANNOTATED_CDS"/>
    <property type="molecule type" value="Genomic_DNA"/>
</dbReference>
<dbReference type="RefSeq" id="NP_001349236.1">
    <property type="nucleotide sequence ID" value="NM_001362307.1"/>
</dbReference>
<dbReference type="RefSeq" id="XP_001344452.4">
    <property type="nucleotide sequence ID" value="XM_001344416.7"/>
</dbReference>
<dbReference type="RefSeq" id="XP_009296315.1">
    <property type="nucleotide sequence ID" value="XM_009298040.3"/>
</dbReference>
<dbReference type="RefSeq" id="XP_021322587.1">
    <property type="nucleotide sequence ID" value="XM_021466912.2"/>
</dbReference>
<dbReference type="RefSeq" id="XP_068078469.1">
    <property type="nucleotide sequence ID" value="XM_068222368.1"/>
</dbReference>
<dbReference type="FunCoup" id="B8JKP6">
    <property type="interactions" value="1219"/>
</dbReference>
<dbReference type="STRING" id="7955.ENSDARP00000122959"/>
<dbReference type="PaxDb" id="7955-ENSDARP00000122959"/>
<dbReference type="PeptideAtlas" id="B8JKP6"/>
<dbReference type="Ensembl" id="ENSDART00000057268">
    <property type="protein sequence ID" value="ENSDARP00000057267"/>
    <property type="gene ID" value="ENSDARG00000039196"/>
</dbReference>
<dbReference type="Ensembl" id="ENSDART00000138562">
    <property type="protein sequence ID" value="ENSDARP00000122959"/>
    <property type="gene ID" value="ENSDARG00000039196"/>
</dbReference>
<dbReference type="GeneID" id="100005373"/>
<dbReference type="AGR" id="ZFIN:ZDB-GENE-030131-4022"/>
<dbReference type="CTD" id="80000"/>
<dbReference type="ZFIN" id="ZDB-GENE-030131-4022">
    <property type="gene designation" value="greb1l"/>
</dbReference>
<dbReference type="eggNOG" id="ENOG502QQXD">
    <property type="taxonomic scope" value="Eukaryota"/>
</dbReference>
<dbReference type="HOGENOM" id="CLU_237163_0_0_1"/>
<dbReference type="InParanoid" id="B8JKP6"/>
<dbReference type="OMA" id="CHQYMEF"/>
<dbReference type="OrthoDB" id="9989163at2759"/>
<dbReference type="PhylomeDB" id="B8JKP6"/>
<dbReference type="TreeFam" id="TF329531"/>
<dbReference type="PRO" id="PR:B8JKP6"/>
<dbReference type="Proteomes" id="UP000000437">
    <property type="component" value="Chromosome 2"/>
</dbReference>
<dbReference type="Bgee" id="ENSDARG00000039196">
    <property type="expression patterns" value="Expressed in spleen and 23 other cell types or tissues"/>
</dbReference>
<dbReference type="GO" id="GO:0016020">
    <property type="term" value="C:membrane"/>
    <property type="evidence" value="ECO:0007669"/>
    <property type="project" value="UniProtKB-SubCell"/>
</dbReference>
<dbReference type="GO" id="GO:0001822">
    <property type="term" value="P:kidney development"/>
    <property type="evidence" value="ECO:0000315"/>
    <property type="project" value="UniProtKB"/>
</dbReference>
<dbReference type="GO" id="GO:0002009">
    <property type="term" value="P:morphogenesis of an epithelium"/>
    <property type="evidence" value="ECO:0000318"/>
    <property type="project" value="GO_Central"/>
</dbReference>
<dbReference type="GO" id="GO:0048793">
    <property type="term" value="P:pronephros development"/>
    <property type="evidence" value="ECO:0000315"/>
    <property type="project" value="ZFIN"/>
</dbReference>
<dbReference type="InterPro" id="IPR028422">
    <property type="entry name" value="GREB1"/>
</dbReference>
<dbReference type="InterPro" id="IPR048659">
    <property type="entry name" value="GREB1-like_2nd"/>
</dbReference>
<dbReference type="InterPro" id="IPR046927">
    <property type="entry name" value="GREB1-like_C"/>
</dbReference>
<dbReference type="InterPro" id="IPR048657">
    <property type="entry name" value="GREB1-like_cpSF2"/>
</dbReference>
<dbReference type="InterPro" id="IPR046926">
    <property type="entry name" value="GREB1_N"/>
</dbReference>
<dbReference type="InterPro" id="IPR049100">
    <property type="entry name" value="TAGT"/>
</dbReference>
<dbReference type="PANTHER" id="PTHR15720:SF12">
    <property type="entry name" value="GREB1-LIKE PROTEIN"/>
    <property type="match status" value="1"/>
</dbReference>
<dbReference type="PANTHER" id="PTHR15720">
    <property type="entry name" value="GREB1-RELATED"/>
    <property type="match status" value="1"/>
</dbReference>
<dbReference type="Pfam" id="PF20692">
    <property type="entry name" value="cpSF2-GREB1"/>
    <property type="match status" value="1"/>
</dbReference>
<dbReference type="Pfam" id="PF20688">
    <property type="entry name" value="GREB1_2nd"/>
    <property type="match status" value="1"/>
</dbReference>
<dbReference type="Pfam" id="PF20267">
    <property type="entry name" value="GREB1_C"/>
    <property type="match status" value="1"/>
</dbReference>
<dbReference type="Pfam" id="PF15782">
    <property type="entry name" value="GREB1_N"/>
    <property type="match status" value="1"/>
</dbReference>
<dbReference type="Pfam" id="PF20691">
    <property type="entry name" value="TAGT"/>
    <property type="match status" value="1"/>
</dbReference>
<proteinExistence type="evidence at protein level"/>
<comment type="function">
    <text evidence="3 4">Plays a major role in early metanephros development.</text>
</comment>
<comment type="subcellular location">
    <subcellularLocation>
        <location evidence="1">Membrane</location>
        <topology evidence="1">Single-pass membrane protein</topology>
    </subcellularLocation>
</comment>
<comment type="developmental stage">
    <text evidence="3">Expressed in the mesoderm, including the intermediate mesoderm, the origin of the pronephros, at 90% epiboly (8.5 hpf) and early somitogenesis stages (11.5 hpf).</text>
</comment>
<comment type="disruption phenotype">
    <text evidence="3 4">Morpholino knockdown of the protein causes abnormal morphology of the proximal kidney.</text>
</comment>
<comment type="similarity">
    <text evidence="6">Belongs to the GREB1 family.</text>
</comment>
<organism>
    <name type="scientific">Danio rerio</name>
    <name type="common">Zebrafish</name>
    <name type="synonym">Brachydanio rerio</name>
    <dbReference type="NCBI Taxonomy" id="7955"/>
    <lineage>
        <taxon>Eukaryota</taxon>
        <taxon>Metazoa</taxon>
        <taxon>Chordata</taxon>
        <taxon>Craniata</taxon>
        <taxon>Vertebrata</taxon>
        <taxon>Euteleostomi</taxon>
        <taxon>Actinopterygii</taxon>
        <taxon>Neopterygii</taxon>
        <taxon>Teleostei</taxon>
        <taxon>Ostariophysi</taxon>
        <taxon>Cypriniformes</taxon>
        <taxon>Danionidae</taxon>
        <taxon>Danioninae</taxon>
        <taxon>Danio</taxon>
    </lineage>
</organism>
<accession>B8JKP6</accession>
<accession>F1QLH8</accession>
<sequence>MGNSYAGQLKSARFEEALHNSIEASLRSSGGDPQPVFTQLYLEPDQYSGHVEDIKPKMDLSLRSDPSTHVLVKCHSSNSVEDMDDEDDSDTSSPPLPYLQGPPPDGCCTVDGFCQAGKDLRLVSMATESIEVPAGFELVGAKSPSIPEHILVCAVDKRFLPDENGKNALLGFSGNCVGCGEKGFRYFTEFSNHINLKLSTQPKKQKHLKYYLVKNSQGALCKGALICWKDCKTRPFSNSASSSKPSSSSSLSSKENGDTNGHSPSPFPLSDSPPARMQSGSSSGIFGPQELGFLKPLNTPTHGTKTLPIVPTALRVNGLTNGLSMDGRSTLLSPPRTNPLSTPSHGYRTTETGDSPASTAMSTGPPKKRHRSWHPTTLVPIPATAVPVPAIRPLTCSSGPLLSLSNQQPASVSGVIQPQPITAGETVIIPDNLLNSYGVRPVLLIGQGTLPYFFGNVGDLVVSPLLVSCYKGRELNEKTLASLGMSANQLLTTETMILLTLQYLARLGTEQIPLREEFEQIMLKAMLCGPTGPPVSPAQLPWLARMEASVSGGSVQVLVTHGSLGEGISESLRSLSETSPQQQQCLPNYVLIICTSKSGANEFCVLVLGKYQSRALAESMLSTNEFLKEISYELITGKVSVLASHFQSTSLGDNMDKQLVRYQRKRKDRVVQPFQGHLTEYIHSQEAATMIPESGPDLLSDDFQIHPPQLSVARSLLSQVCAIADSGSQSLDLGRFCKVDFLILVPPSHVLVHQTVQRIRQSGVLIDLGIEDVSLAMQKSDKYVVRLDTEVHTKMEAFMRKVKQNPYTLFVLIHDNSHVDLTSALSGSVCHGELQGLADRVVNCPEVLEAINLLVLQVSCFPFTLQSRQSRISTQNEVHWPDTENQQGEASPKDLIYFGLKDYSKSLQWGVASPILRCDDAFERMVKTLLERHPHLHSMVIRSYLLIQQYTEALMALTAAPSLRDHVTPQTLAMVEDLLSVPGRSKHGCGHMLLVRVPSLQLARLAQERLEEARDKLGLQYRFAVLLGSPAAEISLPVHFCARLRAWRGCKNEEWVPHTYEDLEGLPCIVILTGKDPLGETFPRSLKYCDLRLIDSSYLTRTALEQEVGLACSYVTRRVIPKTKTATSREERPREGERSSGETAEHDDLPMELERPPSNASAATRTSGSTTENGVSSSSILDKPSSQSDPCGSRTMMDSCSSPVRFKQECDSQAPSSSSTSSFSSASSSSSSSSSPAAQRPSQSTQAPRECNRTQVFPRTAVLSRAAYTLLAPETLGHPSSASLLPHADVSWSSPLRPPVPHGLGGAEQSLYYRQWTTARQHHADYEGPVPHPHPRRLLLSGPPQVGKTGAYLQFLRILFRMLIRLLEVDVYDEEELEEDVQDKSKVPPSSGPQWPDVEDVRKLRFDLCPHDCKFKYSSPVYANRMPKTQSGVKTERLDTEADPPKRNTVSVRLSLFAAHNAFHHCEQCHHYSEPIPAAQLSDCTFHAFTFCSSMLGEEVQLHFIIPKSKESHFVFSQQGSHLESMRLPLLSDKESGMMKSPIFTPTTGRQEHGLLNIYHAMEGAEHLHILVVKQYEMPLYRKYWPNHILLVLPAMFNNSGVGAARFMIKELSYHNLELERNRQEEQGVKRQDVWPFIVMMDDSCVLWNAQQPGPDGKTEVMNVSLKSVLQHMEATPKISQYAVCGLRKWSSSLSSQAPTSPFSRCHLHDLILLNVDLTQNVQYDLNRFTCEEVDFNLRANSSGLLLCRFNQFSIMKKHIPIGGHKDFLIKPKLMRIETPVRVCASQYVCAPDSEQTLLAAPAQFLLEKFLQSCSHRLFPLALSNSANPVLSIDSYLNLGPEVQVCYVSSRPHSVNVDHQGVIFSGLLLYLCDSFVVSSLLKKFNFLKGATLCVICQDRSSLRQTIVRLELEDEWQFRLRDEFQTANCSEDRPLYFLTGRHI</sequence>
<keyword id="KW-0217">Developmental protein</keyword>
<keyword id="KW-0472">Membrane</keyword>
<keyword id="KW-1185">Reference proteome</keyword>
<keyword id="KW-0812">Transmembrane</keyword>
<keyword id="KW-1133">Transmembrane helix</keyword>
<feature type="chain" id="PRO_0000443101" description="GREB1-like protein">
    <location>
        <begin position="1"/>
        <end position="1942"/>
    </location>
</feature>
<feature type="transmembrane region" description="Helical" evidence="1">
    <location>
        <begin position="1861"/>
        <end position="1881"/>
    </location>
</feature>
<feature type="region of interest" description="Disordered" evidence="2">
    <location>
        <begin position="76"/>
        <end position="101"/>
    </location>
</feature>
<feature type="region of interest" description="Disordered" evidence="2">
    <location>
        <begin position="235"/>
        <end position="306"/>
    </location>
</feature>
<feature type="region of interest" description="Disordered" evidence="2">
    <location>
        <begin position="325"/>
        <end position="373"/>
    </location>
</feature>
<feature type="region of interest" description="Disordered" evidence="2">
    <location>
        <begin position="1123"/>
        <end position="1256"/>
    </location>
</feature>
<feature type="compositionally biased region" description="Acidic residues" evidence="2">
    <location>
        <begin position="81"/>
        <end position="90"/>
    </location>
</feature>
<feature type="compositionally biased region" description="Low complexity" evidence="2">
    <location>
        <begin position="237"/>
        <end position="253"/>
    </location>
</feature>
<feature type="compositionally biased region" description="Polar residues" evidence="2">
    <location>
        <begin position="338"/>
        <end position="362"/>
    </location>
</feature>
<feature type="compositionally biased region" description="Basic and acidic residues" evidence="2">
    <location>
        <begin position="1127"/>
        <end position="1155"/>
    </location>
</feature>
<feature type="compositionally biased region" description="Low complexity" evidence="2">
    <location>
        <begin position="1158"/>
        <end position="1171"/>
    </location>
</feature>
<feature type="compositionally biased region" description="Polar residues" evidence="2">
    <location>
        <begin position="1172"/>
        <end position="1202"/>
    </location>
</feature>
<feature type="compositionally biased region" description="Low complexity" evidence="2">
    <location>
        <begin position="1212"/>
        <end position="1248"/>
    </location>
</feature>
<feature type="mutagenesis site" description="Homozygous mutant embryos show abnormal innervation of the sensory epithelia." evidence="5">
    <location>
        <begin position="408"/>
        <end position="1942"/>
    </location>
</feature>
<gene>
    <name type="primary">greb1l</name>
</gene>